<feature type="chain" id="PRO_0000116644" description="Uncharacterized protein C15A10.07">
    <location>
        <begin position="1"/>
        <end position="162"/>
    </location>
</feature>
<proteinExistence type="predicted"/>
<organism>
    <name type="scientific">Schizosaccharomyces pombe (strain 972 / ATCC 24843)</name>
    <name type="common">Fission yeast</name>
    <dbReference type="NCBI Taxonomy" id="284812"/>
    <lineage>
        <taxon>Eukaryota</taxon>
        <taxon>Fungi</taxon>
        <taxon>Dikarya</taxon>
        <taxon>Ascomycota</taxon>
        <taxon>Taphrinomycotina</taxon>
        <taxon>Schizosaccharomycetes</taxon>
        <taxon>Schizosaccharomycetales</taxon>
        <taxon>Schizosaccharomycetaceae</taxon>
        <taxon>Schizosaccharomyces</taxon>
    </lineage>
</organism>
<comment type="subcellular location">
    <subcellularLocation>
        <location evidence="1">Cytoplasm</location>
    </subcellularLocation>
    <subcellularLocation>
        <location evidence="1">Nucleus</location>
    </subcellularLocation>
</comment>
<dbReference type="EMBL" id="CU329670">
    <property type="protein sequence ID" value="CAB10104.2"/>
    <property type="molecule type" value="Genomic_DNA"/>
</dbReference>
<dbReference type="PIR" id="T37707">
    <property type="entry name" value="T37707"/>
</dbReference>
<dbReference type="RefSeq" id="NP_594294.2">
    <property type="nucleotide sequence ID" value="NM_001019717.2"/>
</dbReference>
<dbReference type="BioGRID" id="279235">
    <property type="interactions" value="8"/>
</dbReference>
<dbReference type="iPTMnet" id="O13727"/>
<dbReference type="PaxDb" id="4896-SPAC15A10.07.1"/>
<dbReference type="EnsemblFungi" id="SPAC15A10.07.1">
    <property type="protein sequence ID" value="SPAC15A10.07.1:pep"/>
    <property type="gene ID" value="SPAC15A10.07"/>
</dbReference>
<dbReference type="KEGG" id="spo:2542786"/>
<dbReference type="PomBase" id="SPAC15A10.07"/>
<dbReference type="VEuPathDB" id="FungiDB:SPAC15A10.07"/>
<dbReference type="HOGENOM" id="CLU_1636372_0_0_1"/>
<dbReference type="InParanoid" id="O13727"/>
<dbReference type="OMA" id="ANEHCFL"/>
<dbReference type="PRO" id="PR:O13727"/>
<dbReference type="Proteomes" id="UP000002485">
    <property type="component" value="Chromosome I"/>
</dbReference>
<dbReference type="GO" id="GO:0005829">
    <property type="term" value="C:cytosol"/>
    <property type="evidence" value="ECO:0007005"/>
    <property type="project" value="PomBase"/>
</dbReference>
<dbReference type="GO" id="GO:0005634">
    <property type="term" value="C:nucleus"/>
    <property type="evidence" value="ECO:0007005"/>
    <property type="project" value="PomBase"/>
</dbReference>
<name>YDO7_SCHPO</name>
<keyword id="KW-0963">Cytoplasm</keyword>
<keyword id="KW-0539">Nucleus</keyword>
<keyword id="KW-1185">Reference proteome</keyword>
<evidence type="ECO:0000269" key="1">
    <source>
    </source>
</evidence>
<reference key="1">
    <citation type="journal article" date="2002" name="Nature">
        <title>The genome sequence of Schizosaccharomyces pombe.</title>
        <authorList>
            <person name="Wood V."/>
            <person name="Gwilliam R."/>
            <person name="Rajandream M.A."/>
            <person name="Lyne M.H."/>
            <person name="Lyne R."/>
            <person name="Stewart A."/>
            <person name="Sgouros J.G."/>
            <person name="Peat N."/>
            <person name="Hayles J."/>
            <person name="Baker S.G."/>
            <person name="Basham D."/>
            <person name="Bowman S."/>
            <person name="Brooks K."/>
            <person name="Brown D."/>
            <person name="Brown S."/>
            <person name="Chillingworth T."/>
            <person name="Churcher C.M."/>
            <person name="Collins M."/>
            <person name="Connor R."/>
            <person name="Cronin A."/>
            <person name="Davis P."/>
            <person name="Feltwell T."/>
            <person name="Fraser A."/>
            <person name="Gentles S."/>
            <person name="Goble A."/>
            <person name="Hamlin N."/>
            <person name="Harris D.E."/>
            <person name="Hidalgo J."/>
            <person name="Hodgson G."/>
            <person name="Holroyd S."/>
            <person name="Hornsby T."/>
            <person name="Howarth S."/>
            <person name="Huckle E.J."/>
            <person name="Hunt S."/>
            <person name="Jagels K."/>
            <person name="James K.D."/>
            <person name="Jones L."/>
            <person name="Jones M."/>
            <person name="Leather S."/>
            <person name="McDonald S."/>
            <person name="McLean J."/>
            <person name="Mooney P."/>
            <person name="Moule S."/>
            <person name="Mungall K.L."/>
            <person name="Murphy L.D."/>
            <person name="Niblett D."/>
            <person name="Odell C."/>
            <person name="Oliver K."/>
            <person name="O'Neil S."/>
            <person name="Pearson D."/>
            <person name="Quail M.A."/>
            <person name="Rabbinowitsch E."/>
            <person name="Rutherford K.M."/>
            <person name="Rutter S."/>
            <person name="Saunders D."/>
            <person name="Seeger K."/>
            <person name="Sharp S."/>
            <person name="Skelton J."/>
            <person name="Simmonds M.N."/>
            <person name="Squares R."/>
            <person name="Squares S."/>
            <person name="Stevens K."/>
            <person name="Taylor K."/>
            <person name="Taylor R.G."/>
            <person name="Tivey A."/>
            <person name="Walsh S.V."/>
            <person name="Warren T."/>
            <person name="Whitehead S."/>
            <person name="Woodward J.R."/>
            <person name="Volckaert G."/>
            <person name="Aert R."/>
            <person name="Robben J."/>
            <person name="Grymonprez B."/>
            <person name="Weltjens I."/>
            <person name="Vanstreels E."/>
            <person name="Rieger M."/>
            <person name="Schaefer M."/>
            <person name="Mueller-Auer S."/>
            <person name="Gabel C."/>
            <person name="Fuchs M."/>
            <person name="Duesterhoeft A."/>
            <person name="Fritzc C."/>
            <person name="Holzer E."/>
            <person name="Moestl D."/>
            <person name="Hilbert H."/>
            <person name="Borzym K."/>
            <person name="Langer I."/>
            <person name="Beck A."/>
            <person name="Lehrach H."/>
            <person name="Reinhardt R."/>
            <person name="Pohl T.M."/>
            <person name="Eger P."/>
            <person name="Zimmermann W."/>
            <person name="Wedler H."/>
            <person name="Wambutt R."/>
            <person name="Purnelle B."/>
            <person name="Goffeau A."/>
            <person name="Cadieu E."/>
            <person name="Dreano S."/>
            <person name="Gloux S."/>
            <person name="Lelaure V."/>
            <person name="Mottier S."/>
            <person name="Galibert F."/>
            <person name="Aves S.J."/>
            <person name="Xiang Z."/>
            <person name="Hunt C."/>
            <person name="Moore K."/>
            <person name="Hurst S.M."/>
            <person name="Lucas M."/>
            <person name="Rochet M."/>
            <person name="Gaillardin C."/>
            <person name="Tallada V.A."/>
            <person name="Garzon A."/>
            <person name="Thode G."/>
            <person name="Daga R.R."/>
            <person name="Cruzado L."/>
            <person name="Jimenez J."/>
            <person name="Sanchez M."/>
            <person name="del Rey F."/>
            <person name="Benito J."/>
            <person name="Dominguez A."/>
            <person name="Revuelta J.L."/>
            <person name="Moreno S."/>
            <person name="Armstrong J."/>
            <person name="Forsburg S.L."/>
            <person name="Cerutti L."/>
            <person name="Lowe T."/>
            <person name="McCombie W.R."/>
            <person name="Paulsen I."/>
            <person name="Potashkin J."/>
            <person name="Shpakovski G.V."/>
            <person name="Ussery D."/>
            <person name="Barrell B.G."/>
            <person name="Nurse P."/>
        </authorList>
    </citation>
    <scope>NUCLEOTIDE SEQUENCE [LARGE SCALE GENOMIC DNA]</scope>
    <source>
        <strain>972 / ATCC 24843</strain>
    </source>
</reference>
<reference key="2">
    <citation type="journal article" date="2011" name="Science">
        <title>Comparative functional genomics of the fission yeasts.</title>
        <authorList>
            <person name="Rhind N."/>
            <person name="Chen Z."/>
            <person name="Yassour M."/>
            <person name="Thompson D.A."/>
            <person name="Haas B.J."/>
            <person name="Habib N."/>
            <person name="Wapinski I."/>
            <person name="Roy S."/>
            <person name="Lin M.F."/>
            <person name="Heiman D.I."/>
            <person name="Young S.K."/>
            <person name="Furuya K."/>
            <person name="Guo Y."/>
            <person name="Pidoux A."/>
            <person name="Chen H.M."/>
            <person name="Robbertse B."/>
            <person name="Goldberg J.M."/>
            <person name="Aoki K."/>
            <person name="Bayne E.H."/>
            <person name="Berlin A.M."/>
            <person name="Desjardins C.A."/>
            <person name="Dobbs E."/>
            <person name="Dukaj L."/>
            <person name="Fan L."/>
            <person name="FitzGerald M.G."/>
            <person name="French C."/>
            <person name="Gujja S."/>
            <person name="Hansen K."/>
            <person name="Keifenheim D."/>
            <person name="Levin J.Z."/>
            <person name="Mosher R.A."/>
            <person name="Mueller C.A."/>
            <person name="Pfiffner J."/>
            <person name="Priest M."/>
            <person name="Russ C."/>
            <person name="Smialowska A."/>
            <person name="Swoboda P."/>
            <person name="Sykes S.M."/>
            <person name="Vaughn M."/>
            <person name="Vengrova S."/>
            <person name="Yoder R."/>
            <person name="Zeng Q."/>
            <person name="Allshire R."/>
            <person name="Baulcombe D."/>
            <person name="Birren B.W."/>
            <person name="Brown W."/>
            <person name="Ekwall K."/>
            <person name="Kellis M."/>
            <person name="Leatherwood J."/>
            <person name="Levin H."/>
            <person name="Margalit H."/>
            <person name="Martienssen R."/>
            <person name="Nieduszynski C.A."/>
            <person name="Spatafora J.W."/>
            <person name="Friedman N."/>
            <person name="Dalgaard J.Z."/>
            <person name="Baumann P."/>
            <person name="Niki H."/>
            <person name="Regev A."/>
            <person name="Nusbaum C."/>
        </authorList>
    </citation>
    <scope>REVISION OF GENE MODEL</scope>
</reference>
<reference key="3">
    <citation type="journal article" date="2006" name="Nat. Biotechnol.">
        <title>ORFeome cloning and global analysis of protein localization in the fission yeast Schizosaccharomyces pombe.</title>
        <authorList>
            <person name="Matsuyama A."/>
            <person name="Arai R."/>
            <person name="Yashiroda Y."/>
            <person name="Shirai A."/>
            <person name="Kamata A."/>
            <person name="Sekido S."/>
            <person name="Kobayashi Y."/>
            <person name="Hashimoto A."/>
            <person name="Hamamoto M."/>
            <person name="Hiraoka Y."/>
            <person name="Horinouchi S."/>
            <person name="Yoshida M."/>
        </authorList>
    </citation>
    <scope>SUBCELLULAR LOCATION [LARGE SCALE ANALYSIS]</scope>
</reference>
<gene>
    <name type="ORF">SPAC15A10.07</name>
</gene>
<sequence>MSVVFRTVEDPELKSICTTFTSSISAEFDSNTLVCDLVETDLFTEEGTSQIFTFKKNVLILPANVPEGIELRILEENVSLPLKEFEPIKVPAGAHCFLSWEKVPLRKRIKIISSSQPDDNDEESTWPGVFIKFGVENSSSAEFGEPLKSQIEIPDDQKLIVQ</sequence>
<accession>O13727</accession>
<protein>
    <recommendedName>
        <fullName>Uncharacterized protein C15A10.07</fullName>
    </recommendedName>
</protein>